<name>SP5G_CLOBJ</name>
<feature type="chain" id="PRO_1000148685" description="Putative septation protein SpoVG">
    <location>
        <begin position="1"/>
        <end position="95"/>
    </location>
</feature>
<gene>
    <name evidence="1" type="primary">spoVG</name>
    <name type="ordered locus">CLM_4038</name>
</gene>
<dbReference type="EMBL" id="CP001581">
    <property type="protein sequence ID" value="ACO84674.1"/>
    <property type="molecule type" value="Genomic_DNA"/>
</dbReference>
<dbReference type="RefSeq" id="WP_003359319.1">
    <property type="nucleotide sequence ID" value="NC_012563.1"/>
</dbReference>
<dbReference type="SMR" id="C1FNF2"/>
<dbReference type="GeneID" id="92940335"/>
<dbReference type="KEGG" id="cby:CLM_4038"/>
<dbReference type="eggNOG" id="COG2088">
    <property type="taxonomic scope" value="Bacteria"/>
</dbReference>
<dbReference type="HOGENOM" id="CLU_103669_2_1_9"/>
<dbReference type="Proteomes" id="UP000001374">
    <property type="component" value="Chromosome"/>
</dbReference>
<dbReference type="GO" id="GO:0000917">
    <property type="term" value="P:division septum assembly"/>
    <property type="evidence" value="ECO:0007669"/>
    <property type="project" value="UniProtKB-KW"/>
</dbReference>
<dbReference type="GO" id="GO:0030435">
    <property type="term" value="P:sporulation resulting in formation of a cellular spore"/>
    <property type="evidence" value="ECO:0007669"/>
    <property type="project" value="InterPro"/>
</dbReference>
<dbReference type="Gene3D" id="3.30.1120.40">
    <property type="entry name" value="Stage V sporulation protein G"/>
    <property type="match status" value="1"/>
</dbReference>
<dbReference type="HAMAP" id="MF_00819">
    <property type="entry name" value="SpoVG"/>
    <property type="match status" value="1"/>
</dbReference>
<dbReference type="InterPro" id="IPR007170">
    <property type="entry name" value="SpoVG"/>
</dbReference>
<dbReference type="InterPro" id="IPR036751">
    <property type="entry name" value="SpoVG_sf"/>
</dbReference>
<dbReference type="NCBIfam" id="NF009749">
    <property type="entry name" value="PRK13259.1"/>
    <property type="match status" value="1"/>
</dbReference>
<dbReference type="PANTHER" id="PTHR38429">
    <property type="entry name" value="SEPTATION PROTEIN SPOVG-RELATED"/>
    <property type="match status" value="1"/>
</dbReference>
<dbReference type="PANTHER" id="PTHR38429:SF1">
    <property type="entry name" value="SEPTATION PROTEIN SPOVG-RELATED"/>
    <property type="match status" value="1"/>
</dbReference>
<dbReference type="Pfam" id="PF04026">
    <property type="entry name" value="SpoVG"/>
    <property type="match status" value="1"/>
</dbReference>
<dbReference type="SUPFAM" id="SSF160537">
    <property type="entry name" value="SpoVG-like"/>
    <property type="match status" value="1"/>
</dbReference>
<organism>
    <name type="scientific">Clostridium botulinum (strain Kyoto / Type A2)</name>
    <dbReference type="NCBI Taxonomy" id="536232"/>
    <lineage>
        <taxon>Bacteria</taxon>
        <taxon>Bacillati</taxon>
        <taxon>Bacillota</taxon>
        <taxon>Clostridia</taxon>
        <taxon>Eubacteriales</taxon>
        <taxon>Clostridiaceae</taxon>
        <taxon>Clostridium</taxon>
    </lineage>
</organism>
<proteinExistence type="inferred from homology"/>
<protein>
    <recommendedName>
        <fullName evidence="1">Putative septation protein SpoVG</fullName>
    </recommendedName>
</protein>
<accession>C1FNF2</accession>
<sequence>MQITDVRVRKIAAEGKMKAIVSVTFDNEFVVHDIKVIEGQNGLFIAMPSRKTPDGEYKDIAHPINTETREKIQKSIIEEYERAKMEEESSEKVQE</sequence>
<comment type="function">
    <text evidence="1">Could be involved in septation.</text>
</comment>
<comment type="similarity">
    <text evidence="1">Belongs to the SpoVG family.</text>
</comment>
<keyword id="KW-0131">Cell cycle</keyword>
<keyword id="KW-0132">Cell division</keyword>
<keyword id="KW-0717">Septation</keyword>
<evidence type="ECO:0000255" key="1">
    <source>
        <dbReference type="HAMAP-Rule" id="MF_00819"/>
    </source>
</evidence>
<reference key="1">
    <citation type="submission" date="2008-10" db="EMBL/GenBank/DDBJ databases">
        <title>Genome sequence of Clostridium botulinum A2 Kyoto.</title>
        <authorList>
            <person name="Shrivastava S."/>
            <person name="Brinkac L.M."/>
            <person name="Brown J.L."/>
            <person name="Bruce D."/>
            <person name="Detter C.C."/>
            <person name="Johnson E.A."/>
            <person name="Munk C.A."/>
            <person name="Smith L.A."/>
            <person name="Smith T.J."/>
            <person name="Sutton G."/>
            <person name="Brettin T.S."/>
        </authorList>
    </citation>
    <scope>NUCLEOTIDE SEQUENCE [LARGE SCALE GENOMIC DNA]</scope>
    <source>
        <strain>Kyoto / Type A2</strain>
    </source>
</reference>